<name>PZNA_BACVZ</name>
<organism>
    <name type="scientific">Bacillus velezensis (strain DSM 23117 / BGSC 10A6 / LMG 26770 / FZB42)</name>
    <name type="common">Bacillus amyloliquefaciens subsp. plantarum</name>
    <dbReference type="NCBI Taxonomy" id="326423"/>
    <lineage>
        <taxon>Bacteria</taxon>
        <taxon>Bacillati</taxon>
        <taxon>Bacillota</taxon>
        <taxon>Bacilli</taxon>
        <taxon>Bacillales</taxon>
        <taxon>Bacillaceae</taxon>
        <taxon>Bacillus</taxon>
        <taxon>Bacillus amyloliquefaciens group</taxon>
    </lineage>
</organism>
<gene>
    <name evidence="4" type="primary">pznA</name>
    <name evidence="7" type="synonym">ptnA</name>
    <name type="ordered locus">RBAM_007445</name>
</gene>
<evidence type="ECO:0000269" key="1">
    <source>
    </source>
</evidence>
<evidence type="ECO:0000269" key="2">
    <source>
    </source>
</evidence>
<evidence type="ECO:0000269" key="3">
    <source>
    </source>
</evidence>
<evidence type="ECO:0000303" key="4">
    <source>
    </source>
</evidence>
<evidence type="ECO:0000303" key="5">
    <source>
    </source>
</evidence>
<evidence type="ECO:0000305" key="6"/>
<evidence type="ECO:0000312" key="7">
    <source>
        <dbReference type="EMBL" id="CBJ61635.1"/>
    </source>
</evidence>
<keyword id="KW-0044">Antibiotic</keyword>
<keyword id="KW-0929">Antimicrobial</keyword>
<keyword id="KW-0078">Bacteriocin</keyword>
<keyword id="KW-0134">Cell wall</keyword>
<keyword id="KW-0903">Direct protein sequencing</keyword>
<keyword id="KW-0488">Methylation</keyword>
<keyword id="KW-0964">Secreted</keyword>
<keyword id="KW-0883">Thioether bond</keyword>
<sequence>MTQIKVPTALIASVHGEGQHLFEPMAARCTCTTIISSSSTF</sequence>
<feature type="propeptide" id="PRO_0000415155" evidence="1 3">
    <location>
        <begin position="1"/>
        <end position="27"/>
    </location>
</feature>
<feature type="peptide" id="PRO_0000415156" description="Plantazolicin" evidence="3">
    <location>
        <begin position="28"/>
        <end position="41"/>
    </location>
</feature>
<feature type="modified residue" description="N2,N2-dimethylarginine" evidence="2 3">
    <location>
        <position position="28"/>
    </location>
</feature>
<feature type="cross-link" description="Thiazole-4-carboxylic acid (Arg-Cys)" evidence="2 3">
    <location>
        <begin position="28"/>
        <end position="29"/>
    </location>
</feature>
<feature type="cross-link" description="5-methyloxazole-4-carboxylic acid (Cys-Thr)" evidence="2 3">
    <location>
        <begin position="29"/>
        <end position="30"/>
    </location>
</feature>
<feature type="cross-link" description="Thiazole-4-carboxylic acid (Thr-Cys)" evidence="2 3">
    <location>
        <begin position="30"/>
        <end position="31"/>
    </location>
</feature>
<feature type="cross-link" description="5-methyloxazole-4-carboxylic acid (Cys-Thr)" evidence="2 3">
    <location>
        <begin position="31"/>
        <end position="32"/>
    </location>
</feature>
<feature type="cross-link" description="5-methyloxazole-4-carboxylic acid (Thr-Thr)" evidence="2 3">
    <location>
        <begin position="32"/>
        <end position="33"/>
    </location>
</feature>
<feature type="cross-link" description="Oxazole-4-carboxylic acid (Ile-Ser)" evidence="2 3">
    <location>
        <begin position="35"/>
        <end position="36"/>
    </location>
</feature>
<feature type="cross-link" description="Oxazole-4-carboxylic acid (Ser-Ser)" evidence="2 3">
    <location>
        <begin position="36"/>
        <end position="37"/>
    </location>
</feature>
<feature type="cross-link" description="Oxazole-4-carboxylic acid (Ser-Ser)" evidence="2 3">
    <location>
        <begin position="37"/>
        <end position="38"/>
    </location>
</feature>
<feature type="cross-link" description="Oxazole-4-carboxylic acid (Ser-Ser)" evidence="2 3">
    <location>
        <begin position="38"/>
        <end position="39"/>
    </location>
</feature>
<feature type="cross-link" description="5-methyloxazoline-4-carboxylic acid (Ser-Thr)" evidence="2 3">
    <location>
        <begin position="39"/>
        <end position="40"/>
    </location>
</feature>
<reference evidence="6" key="1">
    <citation type="journal article" date="2011" name="J. Bacteriol.">
        <title>Plantazolicin, a novel microcin B17/streptolysin S-like natural product from Bacillus amyloliquefaciens FZB42.</title>
        <authorList>
            <person name="Scholz R."/>
            <person name="Molohon K.J."/>
            <person name="Nachtigall J."/>
            <person name="Vater J."/>
            <person name="Markley A.L."/>
            <person name="Sussmuth R.D."/>
            <person name="Mitchell D.A."/>
            <person name="Borriss R."/>
        </authorList>
    </citation>
    <scope>NUCLEOTIDE SEQUENCE [GENOMIC DNA]</scope>
    <scope>FUNCTION</scope>
    <scope>SUBCELLULAR LOCATION</scope>
    <scope>MASS SPECTROMETRY</scope>
    <source>
        <strain>DSM 23117 / BGSC 10A6 / LMG 26770 / FZB42</strain>
    </source>
</reference>
<reference evidence="6" key="2">
    <citation type="journal article" date="2007" name="Nat. Biotechnol.">
        <title>Comparative analysis of the complete genome sequence of the plant growth-promoting bacterium Bacillus amyloliquefaciens FZB42.</title>
        <authorList>
            <person name="Chen X.H."/>
            <person name="Koumoutsi A."/>
            <person name="Scholz R."/>
            <person name="Eisenreich A."/>
            <person name="Schneider K."/>
            <person name="Heinemeyer I."/>
            <person name="Morgenstern B."/>
            <person name="Voss B."/>
            <person name="Hess W.R."/>
            <person name="Reva O."/>
            <person name="Junge H."/>
            <person name="Voigt B."/>
            <person name="Jungblut P.R."/>
            <person name="Vater J."/>
            <person name="Suessmuth R."/>
            <person name="Liesegang H."/>
            <person name="Strittmatter A."/>
            <person name="Gottschalk G."/>
            <person name="Borriss R."/>
        </authorList>
    </citation>
    <scope>NUCLEOTIDE SEQUENCE [LARGE SCALE GENOMIC DNA]</scope>
    <source>
        <strain>DSM 23117 / BGSC 10A6 / LMG 26770 / FZB42</strain>
    </source>
</reference>
<reference evidence="6" key="3">
    <citation type="journal article" date="2011" name="ACS Chem. Biol.">
        <title>Structure determination and interception of biosynthetic intermediates for the plantazolicin class of highly discriminating antibiotics.</title>
        <authorList>
            <person name="Molohon K.J."/>
            <person name="Melby J.O."/>
            <person name="Lee J."/>
            <person name="Evans B.S."/>
            <person name="Dunbar K.L."/>
            <person name="Bumpus S.B."/>
            <person name="Kelleher N.L."/>
            <person name="Mitchell D.A."/>
        </authorList>
    </citation>
    <scope>PROTEIN SEQUENCE OF 28-41</scope>
    <scope>FUNCTION</scope>
    <scope>SUBCELLULAR LOCATION</scope>
    <scope>MASS SPECTROMETRY</scope>
    <scope>METHYLATION AT ARG-28</scope>
    <scope>STRUCTURE</scope>
    <source>
        <strain>DSM 23117 / BGSC 10A6 / LMG 26770 / FZB42</strain>
    </source>
</reference>
<reference evidence="6" key="4">
    <citation type="journal article" date="2011" name="Org. Lett.">
        <title>Plantazolicin A and B: structure elucidation of ribosomally synthesized thiazole/oxazole peptides from Bacillus amyloliquefaciens FZB42.</title>
        <authorList>
            <person name="Kalyon B."/>
            <person name="Helaly S.E."/>
            <person name="Scholz R."/>
            <person name="Nachtigall J."/>
            <person name="Vater J."/>
            <person name="Borriss R."/>
            <person name="Sussmuth R.D."/>
        </authorList>
    </citation>
    <scope>STRUCTURE BY NMR</scope>
    <scope>MASS SPECTROMETRY</scope>
    <source>
        <strain>DSM 23117 / BGSC 10A6 / LMG 26770 / FZB42</strain>
    </source>
</reference>
<accession>D3VML5</accession>
<comment type="function">
    <text evidence="1 3">Peptide antibiotic inhibiting growth of Gram-positive bacteria in the dimethylated form plantazolicin A. The desmethyl form plantazolicin B has no antibiotic activity. The mode of action appears to be disruption of cell walls and lysis of cells. Inhibits B.subtilis strain HB0042, B.megaterium strain 7A1 and B.anthracis (MIC=2-4 ug/ml). Weakly inhibits Gram-positive bacteria B.brevis strain ATCC 8246, B.subtilis strain 168, B.cereus strain ATCC 14579 and strain CU1065, B.licheniformis strain ATCC 9789, M.luteus, B.sphaericus, P.granivorans and S.pyogenes (MIC=128 ug/ml). Does not inhibit B.pumilus, P.polymyxa, Arthrobacter sp., S.aureus, vancomycin-resistant E.faecalis, L.monocytogenes, methicillin-resistant S.aureus or Gram-negative bacteria E.coli strain K12, K.terrigena, Pseudomonas sp. and E.carotovora.</text>
</comment>
<comment type="subcellular location">
    <subcellularLocation>
        <location evidence="1 3">Secreted</location>
        <location evidence="1 3">Cell wall</location>
    </subcellularLocation>
</comment>
<comment type="PTM">
    <text evidence="6">Maturation of thiazole and oxazole containing antibiotics involves the enzymatic condensation of a Cys, Ser or Thr with the alpha-carbonyl of the preceding amino acid to form a thioether or ether bond, then dehydration to form a double bond with the alpha-amino nitrogen. Thiazoline or oxazoline ring are dehydrogenated to form thiazole or oxazole rings.</text>
</comment>
<comment type="PTM">
    <text evidence="2">2 forms exist: plantazolicin A and plantazolicin B. The structural difference between them is a dimethylation at Arg-28 in plantazolicin A.</text>
</comment>
<comment type="mass spectrometry">
    <text>Plantazolicin A.</text>
</comment>
<comment type="mass spectrometry">
    <text>Plantazolicin B.</text>
</comment>
<comment type="mass spectrometry"/>
<comment type="mass spectrometry">
    <text>Plantazolicin A.</text>
</comment>
<comment type="mass spectrometry">
    <text>Plantazolicin B.</text>
</comment>
<dbReference type="EMBL" id="FN668567">
    <property type="protein sequence ID" value="CBJ61635.1"/>
    <property type="molecule type" value="Genomic_DNA"/>
</dbReference>
<dbReference type="EMBL" id="CP000560">
    <property type="status" value="NOT_ANNOTATED_CDS"/>
    <property type="molecule type" value="Genomic_DNA"/>
</dbReference>
<dbReference type="iPTMnet" id="D3VML5"/>
<dbReference type="Proteomes" id="UP000001120">
    <property type="component" value="Chromosome"/>
</dbReference>
<dbReference type="GO" id="GO:0005576">
    <property type="term" value="C:extracellular region"/>
    <property type="evidence" value="ECO:0000314"/>
    <property type="project" value="UniProtKB"/>
</dbReference>
<dbReference type="GO" id="GO:0009275">
    <property type="term" value="C:Gram-positive-bacterium-type cell wall"/>
    <property type="evidence" value="ECO:0000314"/>
    <property type="project" value="UniProtKB"/>
</dbReference>
<dbReference type="GO" id="GO:0050830">
    <property type="term" value="P:defense response to Gram-positive bacterium"/>
    <property type="evidence" value="ECO:0000314"/>
    <property type="project" value="UniProtKB"/>
</dbReference>
<dbReference type="GO" id="GO:0001897">
    <property type="term" value="P:symbiont-mediated cytolysis of host cell"/>
    <property type="evidence" value="ECO:0000314"/>
    <property type="project" value="UniProtKB"/>
</dbReference>
<dbReference type="InterPro" id="IPR026474">
    <property type="entry name" value="Plantazolicin"/>
</dbReference>
<dbReference type="NCBIfam" id="TIGR04218">
    <property type="entry name" value="TOMM_plantaz"/>
    <property type="match status" value="1"/>
</dbReference>
<proteinExistence type="evidence at protein level"/>
<protein>
    <recommendedName>
        <fullName evidence="4">Plantazolicin</fullName>
        <shortName evidence="4">PZN</shortName>
    </recommendedName>
    <alternativeName>
        <fullName evidence="5">Plantazolicin A</fullName>
    </alternativeName>
    <alternativeName>
        <fullName evidence="5">Plantazolicin B</fullName>
    </alternativeName>
    <alternativeName>
        <fullName evidence="4">cpd1335</fullName>
    </alternativeName>
</protein>